<proteinExistence type="evidence at protein level"/>
<organism>
    <name type="scientific">Homo sapiens</name>
    <name type="common">Human</name>
    <dbReference type="NCBI Taxonomy" id="9606"/>
    <lineage>
        <taxon>Eukaryota</taxon>
        <taxon>Metazoa</taxon>
        <taxon>Chordata</taxon>
        <taxon>Craniata</taxon>
        <taxon>Vertebrata</taxon>
        <taxon>Euteleostomi</taxon>
        <taxon>Mammalia</taxon>
        <taxon>Eutheria</taxon>
        <taxon>Euarchontoglires</taxon>
        <taxon>Primates</taxon>
        <taxon>Haplorrhini</taxon>
        <taxon>Catarrhini</taxon>
        <taxon>Hominidae</taxon>
        <taxon>Homo</taxon>
    </lineage>
</organism>
<protein>
    <recommendedName>
        <fullName>Collagen alpha-1(XIV) chain</fullName>
    </recommendedName>
    <alternativeName>
        <fullName>Undulin</fullName>
    </alternativeName>
</protein>
<accession>Q05707</accession>
<accession>B2RU07</accession>
<accession>O00260</accession>
<accession>O00261</accession>
<accession>O00262</accession>
<accession>Q05708</accession>
<accession>Q5XJ18</accession>
<accession>Q96C67</accession>
<accession>Q9UDF6</accession>
<comment type="function">
    <text evidence="1 10">Plays an adhesive role by integrating collagen bundles. It is probably associated with the surface of interstitial collagen fibrils via COL1. The COL2 domain may then serve as a rigid arm which sticks out from the fibril and protrudes the large N-terminal globular domain into the extracellular space, where it might interact with other matrix molecules or cell surface receptors (By similarity).</text>
</comment>
<comment type="subunit">
    <text evidence="2">Homotrimer.</text>
</comment>
<comment type="subcellular location">
    <subcellularLocation>
        <location evidence="2">Secreted</location>
        <location evidence="2">Extracellular space</location>
        <location evidence="2">Extracellular matrix</location>
    </subcellularLocation>
</comment>
<comment type="alternative products">
    <event type="alternative splicing"/>
    <isoform>
        <id>Q05707-1</id>
        <name evidence="12">1</name>
        <name evidence="13">Undulin 1</name>
        <name evidence="13">Un1</name>
        <sequence type="displayed"/>
    </isoform>
    <isoform>
        <id>Q05707-2</id>
        <name evidence="12">2</name>
        <sequence type="described" ref="VSP_051654"/>
    </isoform>
    <isoform>
        <id>Q05707-3</id>
        <name evidence="8">3</name>
        <name evidence="13">Undulin 2</name>
        <name evidence="13">Un2</name>
        <sequence type="described" ref="VSP_051653"/>
    </isoform>
</comment>
<comment type="PTM">
    <text evidence="2">Lysines at the third position of the tripeptide repeating unit (G-X-Y) are hydroxylated in all cases and bind carbohydrates.</text>
</comment>
<comment type="PTM">
    <text evidence="2">Prolines at the third position of the tripeptide repeating unit (G-X-Y) are hydroxylated in some or all of the chains.</text>
</comment>
<comment type="PTM">
    <text evidence="2">May contain numerous cysteine residues involved in inter- and intramolecular disulfide bonding.</text>
</comment>
<comment type="similarity">
    <text evidence="3">Belongs to the fibril-associated collagens with interrupted helices (FACIT) family.</text>
</comment>
<comment type="sequence caution" evidence="15">
    <conflict type="miscellaneous discrepancy">
        <sequence resource="EMBL-CDS" id="AAA36795"/>
    </conflict>
</comment>
<comment type="sequence caution" evidence="15">
    <conflict type="frameshift">
        <sequence resource="EMBL-CDS" id="AAH14640"/>
    </conflict>
</comment>
<gene>
    <name evidence="20" type="primary">COL14A1</name>
    <name type="synonym">UND</name>
</gene>
<evidence type="ECO:0000250" key="1"/>
<evidence type="ECO:0000250" key="2">
    <source>
        <dbReference type="UniProtKB" id="P32018"/>
    </source>
</evidence>
<evidence type="ECO:0000255" key="3"/>
<evidence type="ECO:0000255" key="4">
    <source>
        <dbReference type="PROSITE-ProRule" id="PRU00219"/>
    </source>
</evidence>
<evidence type="ECO:0000255" key="5">
    <source>
        <dbReference type="PROSITE-ProRule" id="PRU00316"/>
    </source>
</evidence>
<evidence type="ECO:0000256" key="6">
    <source>
        <dbReference type="SAM" id="MobiDB-lite"/>
    </source>
</evidence>
<evidence type="ECO:0000269" key="7">
    <source>
    </source>
</evidence>
<evidence type="ECO:0000269" key="8">
    <source>
    </source>
</evidence>
<evidence type="ECO:0000269" key="9">
    <source>
    </source>
</evidence>
<evidence type="ECO:0000269" key="10">
    <source>
    </source>
</evidence>
<evidence type="ECO:0000269" key="11">
    <source>
    </source>
</evidence>
<evidence type="ECO:0000269" key="12">
    <source>
    </source>
</evidence>
<evidence type="ECO:0000303" key="13">
    <source>
    </source>
</evidence>
<evidence type="ECO:0000303" key="14">
    <source>
    </source>
</evidence>
<evidence type="ECO:0000305" key="15"/>
<evidence type="ECO:0000312" key="16">
    <source>
        <dbReference type="EMBL" id="AAA36794.1"/>
    </source>
</evidence>
<evidence type="ECO:0000312" key="17">
    <source>
        <dbReference type="EMBL" id="AAH14640.1"/>
    </source>
</evidence>
<evidence type="ECO:0000312" key="18">
    <source>
        <dbReference type="EMBL" id="AAH83495.1"/>
    </source>
</evidence>
<evidence type="ECO:0000312" key="19">
    <source>
        <dbReference type="EMBL" id="CAA72402.1"/>
    </source>
</evidence>
<evidence type="ECO:0000312" key="20">
    <source>
        <dbReference type="HGNC" id="HGNC:2191"/>
    </source>
</evidence>
<sequence length="1796" mass="193515">MKIFQRKMRYWLLPPFLAIVYFCTIVQGQVAPPTRLRYNVISHDSIQISWKAPRGKFGGYKLLVTPTSGGKTNQLNLQNTATKAIIQGLMPDQNYTVQIIAYNKDKESKPAQGQFRIKDLEKRKDPKPRVKVVDRGNGSRPSSPEEVKFVCQTPAIADIVILVDGSWSIGRFNFRLVRHFLENLVTAFDVGSEKTRIGLAQYSGDPRIEWHLNAFSTKDEVIEAVRNLPYKGGNTLTGLALNYIFENSFKPEAGSRTGVSKIGILITDGKSQDDIIPPSRNLRESGVELFAIGVKNADVNELQEIASEPDSTHVYNVAEFDLMHTVVESLTRTLCSRVEEQDREIKASAHAITGPPTELITSEVTARSFMVNWTHAPGNVEKYRVVYYPTRGGKPDEVVVDGTVSSTVLKNLMSLTEYQIAVFAIYAHTASEGLRGTETTLALPMASDLLLYDVTENSMRVKWDAVPGASGYLILYAPLTEGLAGDEKEMKIGETHTDIELSGLLPNTEYTVTVYAMFGEEASDPVTGQETTLALSPPRNLRISNVGSNSARLTWDPTSRQINGYRIVYNNADGTEINEVEVDPITTFPLKGLTPLTEYTIAIFSIYDEGQSEPLTGVFTTEEVPAQQYLEIDEVTTDSFRVTWHPLSADEGLHKLMWIPVYGGKTEEVVLKEEQDSHVIEGLEPGTEYEVSLLAVLDDGSESEVVTAVGTTLDSFWTEPATTIVPTTSVTSVFQTGIRNLVVGDETTSSLRVKWDISDSDVQQFRVTYMTAQGDPEEEVIGTVMVPGSQNNLLLKPLLPDTEYKVTVTPIYTDGEGVSVSAPGKTLPSSGPQNLRVSEEWYNRLRITWDPPSSPVKGYRIVYKPVSVPGPTLETFVGADINTILITNLLSGMDYNVKIFASQASGFSDALTGMVKTLFLGVTNLQAKHVEMTSLCAHWQVHRHATAYRVVIESLQDRQKQESTVGGGTTRHCFYGLQPDSEYKISVYTKLQEIEGPSVSIMEKTQSLPTRPPTFPPTIPPAKEVCKAAKADLVFMVDGSWSIGDENFNKIISFLYSTVGALNKIGTDGTQVAMVQFTDDPRTEFKLNAYKTKETLLDAIKHISYKGGNTKTGKAIKYVRDTLFTAESGTRRGIPKVIVVITDGRSQDDVNKISREMQLDGYSIFAIGVADADYSELVSIGSKPSARHVFFVDDFDAFKKIEDELITFVCETASATCPVVHKDGIDLAGFKMMEMFGLVEKDFSSVEGVSMEPGTFNVFPCYQLHKDALVSQPTRYLHPEGLPSDYTISFLFRILPDTPQEPFALWEILNKNSDPLVGVILDNGGKTLTYFNYDQSGDFQTVTFEGPEIRKIFYGSFHKLHIVVSETLVKVVIDCKQVGEKAMNASANITSDGVEVLGKMVRSRGPGGNSAPFQLQMFDIVCSTSWANTDKCCELPGLRDDESCPDLPHSCSCSETNEVALGPAGPPGGPGLRGPKGQQGEPGPKGPDGPRGEIGLPGPQGPPGPQGPSGLSIQGMPGMPGEKGEKGDTGLPGPQGIPGGVGSPGRDGSPGQRGLPGKDGSSGPPGPPGPIGIPGTPGVPGITGSMGPQGALGPPGVPGAKGERGERGDLQSQAMVRSVARQVCEQLIQSHMARYTAILNQIPSHSSSIRTVQGPPGEPGRPGSPGAPGEQGPPGTPGFPGNAGVPGTPGERGLTGIKGEKGNPGVGTQGPRGPPGPAGPSGESRPGSPGPPGSPGPRGPPGHLGVPGPQGPSGQPGYCDPSSCSAYGVRAPHPDQPEFTPVQDELEAMELWGPGV</sequence>
<reference key="1">
    <citation type="journal article" date="2006" name="Nature">
        <title>DNA sequence and analysis of human chromosome 8.</title>
        <authorList>
            <person name="Nusbaum C."/>
            <person name="Mikkelsen T.S."/>
            <person name="Zody M.C."/>
            <person name="Asakawa S."/>
            <person name="Taudien S."/>
            <person name="Garber M."/>
            <person name="Kodira C.D."/>
            <person name="Schueler M.G."/>
            <person name="Shimizu A."/>
            <person name="Whittaker C.A."/>
            <person name="Chang J.L."/>
            <person name="Cuomo C.A."/>
            <person name="Dewar K."/>
            <person name="FitzGerald M.G."/>
            <person name="Yang X."/>
            <person name="Allen N.R."/>
            <person name="Anderson S."/>
            <person name="Asakawa T."/>
            <person name="Blechschmidt K."/>
            <person name="Bloom T."/>
            <person name="Borowsky M.L."/>
            <person name="Butler J."/>
            <person name="Cook A."/>
            <person name="Corum B."/>
            <person name="DeArellano K."/>
            <person name="DeCaprio D."/>
            <person name="Dooley K.T."/>
            <person name="Dorris L. III"/>
            <person name="Engels R."/>
            <person name="Gloeckner G."/>
            <person name="Hafez N."/>
            <person name="Hagopian D.S."/>
            <person name="Hall J.L."/>
            <person name="Ishikawa S.K."/>
            <person name="Jaffe D.B."/>
            <person name="Kamat A."/>
            <person name="Kudoh J."/>
            <person name="Lehmann R."/>
            <person name="Lokitsang T."/>
            <person name="Macdonald P."/>
            <person name="Major J.E."/>
            <person name="Matthews C.D."/>
            <person name="Mauceli E."/>
            <person name="Menzel U."/>
            <person name="Mihalev A.H."/>
            <person name="Minoshima S."/>
            <person name="Murayama Y."/>
            <person name="Naylor J.W."/>
            <person name="Nicol R."/>
            <person name="Nguyen C."/>
            <person name="O'Leary S.B."/>
            <person name="O'Neill K."/>
            <person name="Parker S.C.J."/>
            <person name="Polley A."/>
            <person name="Raymond C.K."/>
            <person name="Reichwald K."/>
            <person name="Rodriguez J."/>
            <person name="Sasaki T."/>
            <person name="Schilhabel M."/>
            <person name="Siddiqui R."/>
            <person name="Smith C.L."/>
            <person name="Sneddon T.P."/>
            <person name="Talamas J.A."/>
            <person name="Tenzin P."/>
            <person name="Topham K."/>
            <person name="Venkataraman V."/>
            <person name="Wen G."/>
            <person name="Yamazaki S."/>
            <person name="Young S.K."/>
            <person name="Zeng Q."/>
            <person name="Zimmer A.R."/>
            <person name="Rosenthal A."/>
            <person name="Birren B.W."/>
            <person name="Platzer M."/>
            <person name="Shimizu N."/>
            <person name="Lander E.S."/>
        </authorList>
    </citation>
    <scope>NUCLEOTIDE SEQUENCE [LARGE SCALE GENOMIC DNA]</scope>
</reference>
<reference evidence="15 18" key="2">
    <citation type="journal article" date="2004" name="Genome Res.">
        <title>The status, quality, and expansion of the NIH full-length cDNA project: the Mammalian Gene Collection (MGC).</title>
        <authorList>
            <consortium name="The MGC Project Team"/>
        </authorList>
    </citation>
    <scope>NUCLEOTIDE SEQUENCE [LARGE SCALE MRNA] (ISOFORM 1)</scope>
    <scope>VARIANT LEU-1342</scope>
    <source>
        <tissue>Brain</tissue>
        <tissue evidence="17">Muscle</tissue>
        <tissue evidence="18">PNS</tissue>
    </source>
</reference>
<reference evidence="15 19" key="3">
    <citation type="journal article" date="1997" name="Biochim. Biophys. Acta">
        <title>Complete primary structure of human collagen type XIV (undulin).</title>
        <authorList>
            <person name="Bauer M."/>
            <person name="Dieterich W."/>
            <person name="Ehnis T."/>
            <person name="Schuppan D."/>
        </authorList>
    </citation>
    <scope>NUCLEOTIDE SEQUENCE [MRNA] OF 1-165</scope>
    <scope>NUCLEOTIDE SEQUENCE [MRNA] OF 1026-1796 (ISOFORM 1)</scope>
    <scope>NUCLEOTIDE SEQUENCE [MRNA] OF 1760-1796 (ISOFORM 2)</scope>
</reference>
<reference evidence="15 16" key="4">
    <citation type="journal article" date="1991" name="J. Biol. Chem.">
        <title>Undulin is a novel member of the fibronectin-tenascin family of extracellular matrix glycoproteins.</title>
        <authorList>
            <person name="Just M."/>
            <person name="Herbst H."/>
            <person name="Hummel M."/>
            <person name="Duerkop H."/>
            <person name="Tripier D."/>
            <person name="Stein H."/>
            <person name="Schuppan D."/>
        </authorList>
    </citation>
    <scope>NUCLEOTIDE SEQUENCE [MRNA] OF 149-582 (ISOFORM 3)</scope>
    <scope>NUCLEOTIDE SEQUENCE [MRNA] OF 188-1030 (ISOFORM 1)</scope>
</reference>
<reference key="5">
    <citation type="journal article" date="1994" name="Matrix Biol.">
        <title>Structure and stability of the triple-helical domains of human collagen XIV.</title>
        <authorList>
            <person name="Brown J.C."/>
            <person name="Golbik R."/>
            <person name="Mann K."/>
            <person name="Timpl R."/>
        </authorList>
    </citation>
    <scope>PROTEIN SEQUENCE OF 1459-1635 AND 1640-1767</scope>
    <scope>HYDROXYLATION AT PRO-1467; PRO-1470; LYS-1476; PRO-1482; LYS-1485; PRO-1497; PRO-1503; PRO-1517; PRO-1520; LYS-1523; LYS-1526; PRO-1532; PRO-1538; PRO-1544; PRO-1550; PRO-1556; PRO-1565; PRO-1568; PRO-1574; PRO-1577; PRO-1580; PRO-1595; PRO-1598; LYS-1601; PRO-1643; PRO-1656; PRO-1659; PRO-1662; PRO-1665; PRO-1668; PRO-1674; PRO-1677; PRO-1680; PRO-1686; PRO-1689; LYS-1698; LYS-1701; PRO-1704; PRO-1715; PRO-1726; PRO-1729; PRO-1732; PRO-1735; PRO-1741; PRO-1747 AND PRO-1756</scope>
    <scope>GLYCOSYLATION AT LYS-1476; LYS-1485; LYS-1523; LYS-1526; LYS-1601; LYS-1698 AND LYS-1701</scope>
    <source>
        <tissue>Placenta</tissue>
    </source>
</reference>
<reference evidence="15" key="6">
    <citation type="journal article" date="1990" name="J. Biol. Chem.">
        <title>Undulin, an extracellular matrix glycoprotein associated with collagen fibrils.</title>
        <authorList>
            <person name="Schuppan D."/>
            <person name="Cantaluppi M."/>
            <person name="Becker J."/>
            <person name="Veit A."/>
            <person name="Bunte T."/>
            <person name="Troyer D."/>
            <person name="Schuppan F."/>
            <person name="Schmid M."/>
            <person name="Ackermann R."/>
            <person name="Hahn E."/>
        </authorList>
    </citation>
    <scope>FUNCTION</scope>
</reference>
<reference key="7">
    <citation type="journal article" date="2009" name="J. Proteome Res.">
        <title>Glycoproteomics analysis of human liver tissue by combination of multiple enzyme digestion and hydrazide chemistry.</title>
        <authorList>
            <person name="Chen R."/>
            <person name="Jiang X."/>
            <person name="Sun D."/>
            <person name="Han G."/>
            <person name="Wang F."/>
            <person name="Ye M."/>
            <person name="Wang L."/>
            <person name="Zou H."/>
        </authorList>
    </citation>
    <scope>GLYCOSYLATION [LARGE SCALE ANALYSIS] AT ASN-94; ASN-372; ASN-1384 AND ASN-1388</scope>
    <source>
        <tissue>Liver</tissue>
    </source>
</reference>
<reference key="8">
    <citation type="journal article" date="2014" name="J. Proteomics">
        <title>An enzyme assisted RP-RPLC approach for in-depth analysis of human liver phosphoproteome.</title>
        <authorList>
            <person name="Bian Y."/>
            <person name="Song C."/>
            <person name="Cheng K."/>
            <person name="Dong M."/>
            <person name="Wang F."/>
            <person name="Huang J."/>
            <person name="Sun D."/>
            <person name="Wang L."/>
            <person name="Ye M."/>
            <person name="Zou H."/>
        </authorList>
    </citation>
    <scope>IDENTIFICATION BY MASS SPECTROMETRY [LARGE SCALE ANALYSIS]</scope>
    <source>
        <tissue>Liver</tissue>
    </source>
</reference>
<feature type="signal peptide" evidence="3">
    <location>
        <begin position="1"/>
        <end position="28"/>
    </location>
</feature>
<feature type="chain" id="PRO_0000005785" description="Collagen alpha-1(XIV) chain">
    <location>
        <begin position="29"/>
        <end position="1796"/>
    </location>
</feature>
<feature type="domain" description="Fibronectin type-III 1" evidence="5">
    <location>
        <begin position="32"/>
        <end position="122"/>
    </location>
</feature>
<feature type="domain" description="VWFA 1" evidence="4">
    <location>
        <begin position="158"/>
        <end position="330"/>
    </location>
</feature>
<feature type="domain" description="Fibronectin type-III 2" evidence="5">
    <location>
        <begin position="355"/>
        <end position="444"/>
    </location>
</feature>
<feature type="domain" description="Fibronectin type-III 3" evidence="5">
    <location>
        <begin position="445"/>
        <end position="536"/>
    </location>
</feature>
<feature type="domain" description="Fibronectin type-III 4" evidence="5">
    <location>
        <begin position="537"/>
        <end position="626"/>
    </location>
</feature>
<feature type="domain" description="Fibronectin type-III 5" evidence="5">
    <location>
        <begin position="627"/>
        <end position="715"/>
    </location>
</feature>
<feature type="domain" description="Fibronectin type-III 6" evidence="5">
    <location>
        <begin position="737"/>
        <end position="829"/>
    </location>
</feature>
<feature type="domain" description="Fibronectin type-III 7" evidence="5">
    <location>
        <begin position="831"/>
        <end position="921"/>
    </location>
</feature>
<feature type="domain" description="Fibronectin type-III 8" evidence="5">
    <location>
        <begin position="922"/>
        <end position="1010"/>
    </location>
</feature>
<feature type="domain" description="VWFA 2" evidence="4">
    <location>
        <begin position="1032"/>
        <end position="1205"/>
    </location>
</feature>
<feature type="domain" description="Laminin G-like">
    <location>
        <begin position="1229"/>
        <end position="1424"/>
    </location>
</feature>
<feature type="domain" description="Collagen-like 1">
    <location>
        <begin position="1462"/>
        <end position="1510"/>
    </location>
</feature>
<feature type="domain" description="Collagen-like 2">
    <location>
        <begin position="1514"/>
        <end position="1570"/>
    </location>
</feature>
<feature type="domain" description="Collagen-like 3">
    <location>
        <begin position="1571"/>
        <end position="1609"/>
    </location>
</feature>
<feature type="domain" description="Collagen-like 4">
    <location>
        <begin position="1653"/>
        <end position="1705"/>
    </location>
</feature>
<feature type="region of interest" description="Disordered" evidence="6">
    <location>
        <begin position="124"/>
        <end position="145"/>
    </location>
</feature>
<feature type="region of interest" description="Nonhelical region (NC4)">
    <location>
        <begin position="1217"/>
        <end position="1458"/>
    </location>
</feature>
<feature type="region of interest" description="Triple-helical region 1 (COL2)">
    <location>
        <begin position="1459"/>
        <end position="1610"/>
    </location>
</feature>
<feature type="region of interest" description="Disordered" evidence="6">
    <location>
        <begin position="1462"/>
        <end position="1613"/>
    </location>
</feature>
<feature type="region of interest" description="Disordered" evidence="6">
    <location>
        <begin position="1644"/>
        <end position="1781"/>
    </location>
</feature>
<feature type="region of interest" description="Triple-helical region 2 (COL1)">
    <location>
        <begin position="1654"/>
        <end position="1779"/>
    </location>
</feature>
<feature type="short sequence motif" description="Cell attachment site" evidence="3">
    <location>
        <begin position="1607"/>
        <end position="1609"/>
    </location>
</feature>
<feature type="compositionally biased region" description="Basic and acidic residues" evidence="6">
    <location>
        <begin position="124"/>
        <end position="134"/>
    </location>
</feature>
<feature type="compositionally biased region" description="Low complexity" evidence="6">
    <location>
        <begin position="1473"/>
        <end position="1482"/>
    </location>
</feature>
<feature type="compositionally biased region" description="Gly residues" evidence="6">
    <location>
        <begin position="1536"/>
        <end position="1545"/>
    </location>
</feature>
<feature type="compositionally biased region" description="Low complexity" evidence="6">
    <location>
        <begin position="1573"/>
        <end position="1585"/>
    </location>
</feature>
<feature type="compositionally biased region" description="Pro residues" evidence="6">
    <location>
        <begin position="1728"/>
        <end position="1740"/>
    </location>
</feature>
<feature type="compositionally biased region" description="Low complexity" evidence="6">
    <location>
        <begin position="1741"/>
        <end position="1757"/>
    </location>
</feature>
<feature type="modified residue" description="4-hydroxyproline" evidence="11">
    <location>
        <position position="1467"/>
    </location>
</feature>
<feature type="modified residue" description="4-hydroxyproline; partial" evidence="11">
    <location>
        <position position="1470"/>
    </location>
</feature>
<feature type="modified residue" description="5-hydroxylysine; alternate" evidence="11">
    <location>
        <position position="1476"/>
    </location>
</feature>
<feature type="modified residue" description="4-hydroxyproline" evidence="11">
    <location>
        <position position="1482"/>
    </location>
</feature>
<feature type="modified residue" description="5-hydroxylysine; partial" evidence="11">
    <location>
        <position position="1485"/>
    </location>
</feature>
<feature type="modified residue" description="4-hydroxyproline" evidence="11">
    <location>
        <position position="1497"/>
    </location>
</feature>
<feature type="modified residue" description="4-hydroxyproline" evidence="11">
    <location>
        <position position="1503"/>
    </location>
</feature>
<feature type="modified residue" description="4-hydroxyproline" evidence="11">
    <location>
        <position position="1517"/>
    </location>
</feature>
<feature type="modified residue" description="4-hydroxyproline" evidence="11">
    <location>
        <position position="1520"/>
    </location>
</feature>
<feature type="modified residue" description="5-hydroxylysine; partial" evidence="11">
    <location>
        <position position="1523"/>
    </location>
</feature>
<feature type="modified residue" description="5-hydroxylysine; partial" evidence="11">
    <location>
        <position position="1526"/>
    </location>
</feature>
<feature type="modified residue" description="4-hydroxyproline" evidence="11">
    <location>
        <position position="1532"/>
    </location>
</feature>
<feature type="modified residue" description="4-hydroxyproline" evidence="11">
    <location>
        <position position="1538"/>
    </location>
</feature>
<feature type="modified residue" description="4-hydroxyproline" evidence="11">
    <location>
        <position position="1544"/>
    </location>
</feature>
<feature type="modified residue" description="4-hydroxyproline" evidence="11">
    <location>
        <position position="1550"/>
    </location>
</feature>
<feature type="modified residue" description="4-hydroxyproline" evidence="11">
    <location>
        <position position="1556"/>
    </location>
</feature>
<feature type="modified residue" description="4-hydroxyproline" evidence="11">
    <location>
        <position position="1565"/>
    </location>
</feature>
<feature type="modified residue" description="4-hydroxyproline" evidence="11">
    <location>
        <position position="1568"/>
    </location>
</feature>
<feature type="modified residue" description="4-hydroxyproline" evidence="11">
    <location>
        <position position="1574"/>
    </location>
</feature>
<feature type="modified residue" description="4-hydroxyproline" evidence="11">
    <location>
        <position position="1577"/>
    </location>
</feature>
<feature type="modified residue" description="4-hydroxyproline" evidence="11">
    <location>
        <position position="1580"/>
    </location>
</feature>
<feature type="modified residue" description="4-hydroxyproline" evidence="11">
    <location>
        <position position="1595"/>
    </location>
</feature>
<feature type="modified residue" description="4-hydroxyproline" evidence="11">
    <location>
        <position position="1598"/>
    </location>
</feature>
<feature type="modified residue" description="5-hydroxylysine; alternate" evidence="11">
    <location>
        <position position="1601"/>
    </location>
</feature>
<feature type="modified residue" description="4-hydroxyproline; partial" evidence="11">
    <location>
        <position position="1643"/>
    </location>
</feature>
<feature type="modified residue" description="4-hydroxyproline" evidence="11">
    <location>
        <position position="1656"/>
    </location>
</feature>
<feature type="modified residue" description="4-hydroxyproline" evidence="11">
    <location>
        <position position="1659"/>
    </location>
</feature>
<feature type="modified residue" description="4-hydroxyproline" evidence="11">
    <location>
        <position position="1662"/>
    </location>
</feature>
<feature type="modified residue" description="4-hydroxyproline" evidence="11">
    <location>
        <position position="1665"/>
    </location>
</feature>
<feature type="modified residue" description="4-hydroxyproline" evidence="11">
    <location>
        <position position="1668"/>
    </location>
</feature>
<feature type="modified residue" description="4-hydroxyproline" evidence="11">
    <location>
        <position position="1674"/>
    </location>
</feature>
<feature type="modified residue" description="4-hydroxyproline" evidence="11">
    <location>
        <position position="1677"/>
    </location>
</feature>
<feature type="modified residue" description="4-hydroxyproline" evidence="11">
    <location>
        <position position="1680"/>
    </location>
</feature>
<feature type="modified residue" description="4-hydroxyproline" evidence="11">
    <location>
        <position position="1686"/>
    </location>
</feature>
<feature type="modified residue" description="4-hydroxyproline" evidence="11">
    <location>
        <position position="1689"/>
    </location>
</feature>
<feature type="modified residue" description="5-hydroxylysine; alternate" evidence="11">
    <location>
        <position position="1698"/>
    </location>
</feature>
<feature type="modified residue" description="5-hydroxylysine; alternate" evidence="11">
    <location>
        <position position="1701"/>
    </location>
</feature>
<feature type="modified residue" description="4-hydroxyproline" evidence="11">
    <location>
        <position position="1704"/>
    </location>
</feature>
<feature type="modified residue" description="4-hydroxyproline" evidence="11">
    <location>
        <position position="1715"/>
    </location>
</feature>
<feature type="modified residue" description="4-hydroxyproline; partial" evidence="11">
    <location>
        <position position="1726"/>
    </location>
</feature>
<feature type="modified residue" description="4-hydroxyproline" evidence="11">
    <location>
        <position position="1729"/>
    </location>
</feature>
<feature type="modified residue" description="4-hydroxyproline" evidence="11">
    <location>
        <position position="1732"/>
    </location>
</feature>
<feature type="modified residue" description="4-hydroxyproline" evidence="11">
    <location>
        <position position="1735"/>
    </location>
</feature>
<feature type="modified residue" description="4-hydroxyproline" evidence="11">
    <location>
        <position position="1741"/>
    </location>
</feature>
<feature type="modified residue" description="4-hydroxyproline" evidence="11">
    <location>
        <position position="1747"/>
    </location>
</feature>
<feature type="modified residue" description="4-hydroxyproline" evidence="11">
    <location>
        <position position="1756"/>
    </location>
</feature>
<feature type="glycosylation site" description="N-linked (GlcNAc...) asparagine" evidence="9">
    <location>
        <position position="94"/>
    </location>
</feature>
<feature type="glycosylation site" description="N-linked (GlcNAc...) asparagine" evidence="3">
    <location>
        <position position="137"/>
    </location>
</feature>
<feature type="glycosylation site" description="N-linked (GlcNAc...) asparagine" evidence="9">
    <location>
        <position position="372"/>
    </location>
</feature>
<feature type="glycosylation site" description="N-linked (GlcNAc...) asparagine" evidence="9">
    <location>
        <position position="1384"/>
    </location>
</feature>
<feature type="glycosylation site" description="N-linked (GlcNAc...) asparagine" evidence="9">
    <location>
        <position position="1388"/>
    </location>
</feature>
<feature type="glycosylation site" description="O-linked (Gal...) hydroxylysine; alternate" evidence="11">
    <location>
        <position position="1476"/>
    </location>
</feature>
<feature type="glycosylation site" description="O-linked (Gal...) hydroxylysine; partial" evidence="11">
    <location>
        <position position="1485"/>
    </location>
</feature>
<feature type="glycosylation site" description="O-linked (Gal...) hydroxylysine; partial" evidence="11">
    <location>
        <position position="1523"/>
    </location>
</feature>
<feature type="glycosylation site" description="O-linked (Gal...) hydroxylysine; partial" evidence="11">
    <location>
        <position position="1526"/>
    </location>
</feature>
<feature type="glycosylation site" description="O-linked (Gal...) hydroxylysine; alternate" evidence="11">
    <location>
        <position position="1601"/>
    </location>
</feature>
<feature type="glycosylation site" description="O-linked (Gal...) hydroxylysine; alternate" evidence="11">
    <location>
        <position position="1698"/>
    </location>
</feature>
<feature type="glycosylation site" description="O-linked (Gal...) hydroxylysine; alternate" evidence="11">
    <location>
        <position position="1701"/>
    </location>
</feature>
<feature type="splice variant" id="VSP_051653" description="In isoform 3." evidence="13">
    <location>
        <begin position="197"/>
        <end position="291"/>
    </location>
</feature>
<feature type="splice variant" id="VSP_051654" description="In isoform 2." evidence="14">
    <original>APHPDQPEFTPVQDELEAMELWGPGV</original>
    <variation>DLIPYNDYQH</variation>
    <location>
        <begin position="1771"/>
        <end position="1796"/>
    </location>
</feature>
<feature type="sequence variant" id="VAR_048772" description="In dbSNP:rs4870723.">
    <original>N</original>
    <variation>H</variation>
    <location>
        <position position="563"/>
    </location>
</feature>
<feature type="sequence variant" id="VAR_061113" description="In dbSNP:rs56815167.">
    <original>T</original>
    <variation>A</variation>
    <location>
        <position position="636"/>
    </location>
</feature>
<feature type="sequence variant" id="VAR_048773" description="In dbSNP:rs2305606.">
    <original>P</original>
    <variation>L</variation>
    <location>
        <position position="855"/>
    </location>
</feature>
<feature type="sequence variant" id="VAR_048774" description="In dbSNP:rs11774228.">
    <original>V</original>
    <variation>I</variation>
    <location>
        <position position="922"/>
    </location>
</feature>
<feature type="sequence variant" id="VAR_048775" description="In dbSNP:rs17833992." evidence="7">
    <original>V</original>
    <variation>L</variation>
    <location>
        <position position="1342"/>
    </location>
</feature>
<feature type="sequence conflict" description="In Ref. 2; AAA36794." evidence="15" ref="2">
    <original>T</original>
    <variation>I</variation>
    <location>
        <position position="616"/>
    </location>
</feature>
<feature type="sequence conflict" description="In Ref. 2; AAA36794." evidence="15" ref="2">
    <original>V</original>
    <variation>G</variation>
    <location>
        <position position="1025"/>
    </location>
</feature>
<name>COEA1_HUMAN</name>
<dbReference type="EMBL" id="AC020603">
    <property type="status" value="NOT_ANNOTATED_CDS"/>
    <property type="molecule type" value="Genomic_DNA"/>
</dbReference>
<dbReference type="EMBL" id="AC090735">
    <property type="status" value="NOT_ANNOTATED_CDS"/>
    <property type="molecule type" value="Genomic_DNA"/>
</dbReference>
<dbReference type="EMBL" id="AC107877">
    <property type="status" value="NOT_ANNOTATED_CDS"/>
    <property type="molecule type" value="Genomic_DNA"/>
</dbReference>
<dbReference type="EMBL" id="BC014640">
    <property type="protein sequence ID" value="AAH14640.1"/>
    <property type="status" value="ALT_FRAME"/>
    <property type="molecule type" value="mRNA"/>
</dbReference>
<dbReference type="EMBL" id="BC083495">
    <property type="protein sequence ID" value="AAH83495.1"/>
    <property type="molecule type" value="mRNA"/>
</dbReference>
<dbReference type="EMBL" id="BC140893">
    <property type="protein sequence ID" value="AAI40894.1"/>
    <property type="molecule type" value="mRNA"/>
</dbReference>
<dbReference type="EMBL" id="Y11709">
    <property type="protein sequence ID" value="CAA72401.1"/>
    <property type="molecule type" value="mRNA"/>
</dbReference>
<dbReference type="EMBL" id="Y11710">
    <property type="protein sequence ID" value="CAA72402.1"/>
    <property type="molecule type" value="mRNA"/>
</dbReference>
<dbReference type="EMBL" id="Y11711">
    <property type="protein sequence ID" value="CAA72403.1"/>
    <property type="molecule type" value="mRNA"/>
</dbReference>
<dbReference type="EMBL" id="M64108">
    <property type="protein sequence ID" value="AAA36794.1"/>
    <property type="molecule type" value="mRNA"/>
</dbReference>
<dbReference type="EMBL" id="M64109">
    <property type="protein sequence ID" value="AAA36795.1"/>
    <property type="status" value="ALT_SEQ"/>
    <property type="molecule type" value="mRNA"/>
</dbReference>
<dbReference type="CCDS" id="CCDS34938.1">
    <molecule id="Q05707-1"/>
</dbReference>
<dbReference type="CCDS" id="CCDS94338.1">
    <molecule id="Q05707-2"/>
</dbReference>
<dbReference type="PIR" id="A40970">
    <property type="entry name" value="A40970"/>
</dbReference>
<dbReference type="PIR" id="B40970">
    <property type="entry name" value="B40970"/>
</dbReference>
<dbReference type="PIR" id="S37749">
    <property type="entry name" value="S37749"/>
</dbReference>
<dbReference type="PIR" id="S46657">
    <property type="entry name" value="S46657"/>
</dbReference>
<dbReference type="RefSeq" id="NP_001371876.1">
    <molecule id="Q05707-2"/>
    <property type="nucleotide sequence ID" value="NM_001384947.1"/>
</dbReference>
<dbReference type="RefSeq" id="NP_001400419.1">
    <molecule id="Q05707-1"/>
    <property type="nucleotide sequence ID" value="NM_001413490.1"/>
</dbReference>
<dbReference type="RefSeq" id="NP_001400420.1">
    <molecule id="Q05707-2"/>
    <property type="nucleotide sequence ID" value="NM_001413491.1"/>
</dbReference>
<dbReference type="RefSeq" id="NP_001400422.1">
    <molecule id="Q05707-1"/>
    <property type="nucleotide sequence ID" value="NM_001413493.1"/>
</dbReference>
<dbReference type="RefSeq" id="NP_001400423.1">
    <molecule id="Q05707-2"/>
    <property type="nucleotide sequence ID" value="NM_001413494.1"/>
</dbReference>
<dbReference type="RefSeq" id="NP_066933.1">
    <molecule id="Q05707-1"/>
    <property type="nucleotide sequence ID" value="NM_021110.4"/>
</dbReference>
<dbReference type="RefSeq" id="XP_005251116.1">
    <property type="nucleotide sequence ID" value="XM_005251059.3"/>
</dbReference>
<dbReference type="RefSeq" id="XP_006716714.1">
    <property type="nucleotide sequence ID" value="XM_006716651.3"/>
</dbReference>
<dbReference type="RefSeq" id="XP_016869298.1">
    <property type="nucleotide sequence ID" value="XM_017013809.1"/>
</dbReference>
<dbReference type="SMR" id="Q05707"/>
<dbReference type="BioGRID" id="113219">
    <property type="interactions" value="88"/>
</dbReference>
<dbReference type="ComplexPortal" id="CPX-1755">
    <property type="entry name" value="Collagen type XIV trimer"/>
</dbReference>
<dbReference type="FunCoup" id="Q05707">
    <property type="interactions" value="568"/>
</dbReference>
<dbReference type="IntAct" id="Q05707">
    <property type="interactions" value="70"/>
</dbReference>
<dbReference type="STRING" id="9606.ENSP00000297848"/>
<dbReference type="GlyConnect" id="1132">
    <property type="glycosylation" value="18 N-Linked glycans (4 sites)"/>
</dbReference>
<dbReference type="GlyCosmos" id="Q05707">
    <property type="glycosylation" value="18 sites, 24 glycans"/>
</dbReference>
<dbReference type="GlyGen" id="Q05707">
    <property type="glycosylation" value="27 sites, 97 N-linked glycans (5 sites), 9 O-linked glycans (11 sites)"/>
</dbReference>
<dbReference type="iPTMnet" id="Q05707"/>
<dbReference type="PhosphoSitePlus" id="Q05707"/>
<dbReference type="BioMuta" id="COL14A1"/>
<dbReference type="DMDM" id="125987815"/>
<dbReference type="jPOST" id="Q05707"/>
<dbReference type="MassIVE" id="Q05707"/>
<dbReference type="PaxDb" id="9606-ENSP00000297848"/>
<dbReference type="PeptideAtlas" id="Q05707"/>
<dbReference type="ProteomicsDB" id="58350">
    <molecule id="Q05707-1"/>
</dbReference>
<dbReference type="ProteomicsDB" id="58351">
    <molecule id="Q05707-2"/>
</dbReference>
<dbReference type="ProteomicsDB" id="58352">
    <molecule id="Q05707-3"/>
</dbReference>
<dbReference type="Pumba" id="Q05707"/>
<dbReference type="Antibodypedia" id="13712">
    <property type="antibodies" value="117 antibodies from 24 providers"/>
</dbReference>
<dbReference type="DNASU" id="7373"/>
<dbReference type="Ensembl" id="ENST00000297848.8">
    <molecule id="Q05707-1"/>
    <property type="protein sequence ID" value="ENSP00000297848.3"/>
    <property type="gene ID" value="ENSG00000187955.13"/>
</dbReference>
<dbReference type="Ensembl" id="ENST00000309791.8">
    <molecule id="Q05707-2"/>
    <property type="protein sequence ID" value="ENSP00000311809.4"/>
    <property type="gene ID" value="ENSG00000187955.13"/>
</dbReference>
<dbReference type="GeneID" id="7373"/>
<dbReference type="KEGG" id="hsa:7373"/>
<dbReference type="MANE-Select" id="ENST00000297848.8">
    <property type="protein sequence ID" value="ENSP00000297848.3"/>
    <property type="RefSeq nucleotide sequence ID" value="NM_021110.4"/>
    <property type="RefSeq protein sequence ID" value="NP_066933.1"/>
</dbReference>
<dbReference type="UCSC" id="uc003yox.5">
    <molecule id="Q05707-1"/>
    <property type="organism name" value="human"/>
</dbReference>
<dbReference type="AGR" id="HGNC:2191"/>
<dbReference type="CTD" id="7373"/>
<dbReference type="DisGeNET" id="7373"/>
<dbReference type="GeneCards" id="COL14A1"/>
<dbReference type="HGNC" id="HGNC:2191">
    <property type="gene designation" value="COL14A1"/>
</dbReference>
<dbReference type="HPA" id="ENSG00000187955">
    <property type="expression patterns" value="Tissue enhanced (cervix)"/>
</dbReference>
<dbReference type="MalaCards" id="COL14A1"/>
<dbReference type="MIM" id="120324">
    <property type="type" value="gene"/>
</dbReference>
<dbReference type="neXtProt" id="NX_Q05707"/>
<dbReference type="OpenTargets" id="ENSG00000187955"/>
<dbReference type="Orphanet" id="79501">
    <property type="disease" value="Punctate palmoplantar keratoderma type 1"/>
</dbReference>
<dbReference type="PharmGKB" id="PA26707"/>
<dbReference type="VEuPathDB" id="HostDB:ENSG00000187955"/>
<dbReference type="eggNOG" id="KOG3544">
    <property type="taxonomic scope" value="Eukaryota"/>
</dbReference>
<dbReference type="GeneTree" id="ENSGT00940000153769"/>
<dbReference type="HOGENOM" id="CLU_002527_2_0_1"/>
<dbReference type="InParanoid" id="Q05707"/>
<dbReference type="OMA" id="HIAQPEF"/>
<dbReference type="OrthoDB" id="18894at2759"/>
<dbReference type="PAN-GO" id="Q05707">
    <property type="GO annotations" value="2 GO annotations based on evolutionary models"/>
</dbReference>
<dbReference type="PhylomeDB" id="Q05707"/>
<dbReference type="TreeFam" id="TF329914"/>
<dbReference type="PathwayCommons" id="Q05707"/>
<dbReference type="Reactome" id="R-HSA-1442490">
    <property type="pathway name" value="Collagen degradation"/>
</dbReference>
<dbReference type="Reactome" id="R-HSA-1650814">
    <property type="pathway name" value="Collagen biosynthesis and modifying enzymes"/>
</dbReference>
<dbReference type="Reactome" id="R-HSA-2022090">
    <property type="pathway name" value="Assembly of collagen fibrils and other multimeric structures"/>
</dbReference>
<dbReference type="Reactome" id="R-HSA-8948216">
    <property type="pathway name" value="Collagen chain trimerization"/>
</dbReference>
<dbReference type="SignaLink" id="Q05707"/>
<dbReference type="SIGNOR" id="Q05707"/>
<dbReference type="BioGRID-ORCS" id="7373">
    <property type="hits" value="12 hits in 1150 CRISPR screens"/>
</dbReference>
<dbReference type="ChiTaRS" id="COL14A1">
    <property type="organism name" value="human"/>
</dbReference>
<dbReference type="GeneWiki" id="Collagen,_type_XIV,_alpha_1"/>
<dbReference type="GenomeRNAi" id="7373"/>
<dbReference type="Pharos" id="Q05707">
    <property type="development level" value="Tbio"/>
</dbReference>
<dbReference type="PRO" id="PR:Q05707"/>
<dbReference type="Proteomes" id="UP000005640">
    <property type="component" value="Chromosome 8"/>
</dbReference>
<dbReference type="RNAct" id="Q05707">
    <property type="molecule type" value="protein"/>
</dbReference>
<dbReference type="Bgee" id="ENSG00000187955">
    <property type="expression patterns" value="Expressed in descending thoracic aorta and 169 other cell types or tissues"/>
</dbReference>
<dbReference type="ExpressionAtlas" id="Q05707">
    <property type="expression patterns" value="baseline and differential"/>
</dbReference>
<dbReference type="GO" id="GO:0005581">
    <property type="term" value="C:collagen trimer"/>
    <property type="evidence" value="ECO:0000303"/>
    <property type="project" value="UniProtKB"/>
</dbReference>
<dbReference type="GO" id="GO:0005596">
    <property type="term" value="C:collagen type XIV trimer"/>
    <property type="evidence" value="ECO:0000303"/>
    <property type="project" value="UniProtKB"/>
</dbReference>
<dbReference type="GO" id="GO:0062023">
    <property type="term" value="C:collagen-containing extracellular matrix"/>
    <property type="evidence" value="ECO:0007005"/>
    <property type="project" value="BHF-UCL"/>
</dbReference>
<dbReference type="GO" id="GO:0005788">
    <property type="term" value="C:endoplasmic reticulum lumen"/>
    <property type="evidence" value="ECO:0000304"/>
    <property type="project" value="Reactome"/>
</dbReference>
<dbReference type="GO" id="GO:0031012">
    <property type="term" value="C:extracellular matrix"/>
    <property type="evidence" value="ECO:0000303"/>
    <property type="project" value="UniProtKB"/>
</dbReference>
<dbReference type="GO" id="GO:0005576">
    <property type="term" value="C:extracellular region"/>
    <property type="evidence" value="ECO:0007005"/>
    <property type="project" value="BHF-UCL"/>
</dbReference>
<dbReference type="GO" id="GO:0005615">
    <property type="term" value="C:extracellular space"/>
    <property type="evidence" value="ECO:0007005"/>
    <property type="project" value="BHF-UCL"/>
</dbReference>
<dbReference type="GO" id="GO:0005614">
    <property type="term" value="C:interstitial matrix"/>
    <property type="evidence" value="ECO:0000318"/>
    <property type="project" value="GO_Central"/>
</dbReference>
<dbReference type="GO" id="GO:0005518">
    <property type="term" value="F:collagen binding"/>
    <property type="evidence" value="ECO:0000303"/>
    <property type="project" value="UniProtKB"/>
</dbReference>
<dbReference type="GO" id="GO:0005201">
    <property type="term" value="F:extracellular matrix structural constituent"/>
    <property type="evidence" value="ECO:0000303"/>
    <property type="project" value="UniProtKB"/>
</dbReference>
<dbReference type="GO" id="GO:0030020">
    <property type="term" value="F:extracellular matrix structural constituent conferring tensile strength"/>
    <property type="evidence" value="ECO:0000250"/>
    <property type="project" value="BHF-UCL"/>
</dbReference>
<dbReference type="GO" id="GO:0030674">
    <property type="term" value="F:protein-macromolecule adaptor activity"/>
    <property type="evidence" value="ECO:0000303"/>
    <property type="project" value="UniProtKB"/>
</dbReference>
<dbReference type="GO" id="GO:0003723">
    <property type="term" value="F:RNA binding"/>
    <property type="evidence" value="ECO:0007005"/>
    <property type="project" value="UniProtKB"/>
</dbReference>
<dbReference type="GO" id="GO:0098609">
    <property type="term" value="P:cell-cell adhesion"/>
    <property type="evidence" value="ECO:0000303"/>
    <property type="project" value="UniProtKB"/>
</dbReference>
<dbReference type="GO" id="GO:0030199">
    <property type="term" value="P:collagen fibril organization"/>
    <property type="evidence" value="ECO:0000303"/>
    <property type="project" value="UniProtKB"/>
</dbReference>
<dbReference type="GO" id="GO:0030198">
    <property type="term" value="P:extracellular matrix organization"/>
    <property type="evidence" value="ECO:0000303"/>
    <property type="project" value="UniProtKB"/>
</dbReference>
<dbReference type="GO" id="GO:0048873">
    <property type="term" value="P:homeostasis of number of cells within a tissue"/>
    <property type="evidence" value="ECO:0007669"/>
    <property type="project" value="Ensembl"/>
</dbReference>
<dbReference type="GO" id="GO:0061050">
    <property type="term" value="P:regulation of cell growth involved in cardiac muscle cell development"/>
    <property type="evidence" value="ECO:0007669"/>
    <property type="project" value="Ensembl"/>
</dbReference>
<dbReference type="GO" id="GO:0003229">
    <property type="term" value="P:ventricular cardiac muscle tissue development"/>
    <property type="evidence" value="ECO:0007669"/>
    <property type="project" value="Ensembl"/>
</dbReference>
<dbReference type="CDD" id="cd00063">
    <property type="entry name" value="FN3"/>
    <property type="match status" value="8"/>
</dbReference>
<dbReference type="CDD" id="cd01482">
    <property type="entry name" value="vWA_collagen_alphaI-XII-like"/>
    <property type="match status" value="2"/>
</dbReference>
<dbReference type="FunFam" id="2.60.40.10:FF:000444">
    <property type="entry name" value="Collagen alpha-1(XIV) chain isoform X2"/>
    <property type="match status" value="1"/>
</dbReference>
<dbReference type="FunFam" id="2.60.40.10:FF:000514">
    <property type="entry name" value="Collagen alpha-1(XIV) chain isoform X2"/>
    <property type="match status" value="1"/>
</dbReference>
<dbReference type="FunFam" id="2.60.40.10:FF:000546">
    <property type="entry name" value="Collagen alpha-1(XIV) chain isoform X2"/>
    <property type="match status" value="1"/>
</dbReference>
<dbReference type="FunFam" id="2.60.40.10:FF:000403">
    <property type="entry name" value="collagen alpha-1(XIV) chain isoform X2"/>
    <property type="match status" value="1"/>
</dbReference>
<dbReference type="FunFam" id="2.60.40.10:FF:000615">
    <property type="entry name" value="collagen alpha-1(XIV) chain isoform X2"/>
    <property type="match status" value="1"/>
</dbReference>
<dbReference type="FunFam" id="2.60.40.10:FF:000656">
    <property type="entry name" value="collagen alpha-1(XIV) chain isoform X2"/>
    <property type="match status" value="1"/>
</dbReference>
<dbReference type="FunFam" id="2.60.120.200:FF:000008">
    <property type="entry name" value="Collagen type XII alpha 1 chain"/>
    <property type="match status" value="1"/>
</dbReference>
<dbReference type="FunFam" id="2.60.40.10:FF:000234">
    <property type="entry name" value="Collagen, type XII, alpha 1"/>
    <property type="match status" value="2"/>
</dbReference>
<dbReference type="FunFam" id="3.40.50.410:FF:000001">
    <property type="entry name" value="Collagen, type XII, alpha 1"/>
    <property type="match status" value="2"/>
</dbReference>
<dbReference type="Gene3D" id="2.60.120.200">
    <property type="match status" value="1"/>
</dbReference>
<dbReference type="Gene3D" id="2.60.40.10">
    <property type="entry name" value="Immunoglobulins"/>
    <property type="match status" value="8"/>
</dbReference>
<dbReference type="Gene3D" id="3.40.50.410">
    <property type="entry name" value="von Willebrand factor, type A domain"/>
    <property type="match status" value="2"/>
</dbReference>
<dbReference type="InterPro" id="IPR008160">
    <property type="entry name" value="Collagen"/>
</dbReference>
<dbReference type="InterPro" id="IPR013320">
    <property type="entry name" value="ConA-like_dom_sf"/>
</dbReference>
<dbReference type="InterPro" id="IPR050525">
    <property type="entry name" value="ECM_Assembly_Org"/>
</dbReference>
<dbReference type="InterPro" id="IPR003961">
    <property type="entry name" value="FN3_dom"/>
</dbReference>
<dbReference type="InterPro" id="IPR036116">
    <property type="entry name" value="FN3_sf"/>
</dbReference>
<dbReference type="InterPro" id="IPR013783">
    <property type="entry name" value="Ig-like_fold"/>
</dbReference>
<dbReference type="InterPro" id="IPR048287">
    <property type="entry name" value="TSPN-like_N"/>
</dbReference>
<dbReference type="InterPro" id="IPR002035">
    <property type="entry name" value="VWF_A"/>
</dbReference>
<dbReference type="InterPro" id="IPR036465">
    <property type="entry name" value="vWFA_dom_sf"/>
</dbReference>
<dbReference type="PANTHER" id="PTHR24020">
    <property type="entry name" value="COLLAGEN ALPHA"/>
    <property type="match status" value="1"/>
</dbReference>
<dbReference type="PANTHER" id="PTHR24020:SF15">
    <property type="entry name" value="COLLAGEN ALPHA-1(XIV) CHAIN"/>
    <property type="match status" value="1"/>
</dbReference>
<dbReference type="Pfam" id="PF01391">
    <property type="entry name" value="Collagen"/>
    <property type="match status" value="4"/>
</dbReference>
<dbReference type="Pfam" id="PF00041">
    <property type="entry name" value="fn3"/>
    <property type="match status" value="7"/>
</dbReference>
<dbReference type="Pfam" id="PF00092">
    <property type="entry name" value="VWA"/>
    <property type="match status" value="2"/>
</dbReference>
<dbReference type="PRINTS" id="PR00453">
    <property type="entry name" value="VWFADOMAIN"/>
</dbReference>
<dbReference type="SMART" id="SM00060">
    <property type="entry name" value="FN3"/>
    <property type="match status" value="8"/>
</dbReference>
<dbReference type="SMART" id="SM00210">
    <property type="entry name" value="TSPN"/>
    <property type="match status" value="1"/>
</dbReference>
<dbReference type="SMART" id="SM00327">
    <property type="entry name" value="VWA"/>
    <property type="match status" value="2"/>
</dbReference>
<dbReference type="SUPFAM" id="SSF49899">
    <property type="entry name" value="Concanavalin A-like lectins/glucanases"/>
    <property type="match status" value="1"/>
</dbReference>
<dbReference type="SUPFAM" id="SSF49265">
    <property type="entry name" value="Fibronectin type III"/>
    <property type="match status" value="5"/>
</dbReference>
<dbReference type="SUPFAM" id="SSF53300">
    <property type="entry name" value="vWA-like"/>
    <property type="match status" value="2"/>
</dbReference>
<dbReference type="PROSITE" id="PS50853">
    <property type="entry name" value="FN3"/>
    <property type="match status" value="8"/>
</dbReference>
<dbReference type="PROSITE" id="PS50234">
    <property type="entry name" value="VWFA"/>
    <property type="match status" value="2"/>
</dbReference>
<keyword id="KW-0025">Alternative splicing</keyword>
<keyword id="KW-0130">Cell adhesion</keyword>
<keyword id="KW-0176">Collagen</keyword>
<keyword id="KW-0903">Direct protein sequencing</keyword>
<keyword id="KW-1015">Disulfide bond</keyword>
<keyword id="KW-0272">Extracellular matrix</keyword>
<keyword id="KW-0325">Glycoprotein</keyword>
<keyword id="KW-0379">Hydroxylation</keyword>
<keyword id="KW-1267">Proteomics identification</keyword>
<keyword id="KW-1185">Reference proteome</keyword>
<keyword id="KW-0677">Repeat</keyword>
<keyword id="KW-0964">Secreted</keyword>
<keyword id="KW-0732">Signal</keyword>